<proteinExistence type="predicted"/>
<accession>C0H3S3</accession>
<keyword id="KW-1185">Reference proteome</keyword>
<dbReference type="EMBL" id="AL009126">
    <property type="protein sequence ID" value="CAX52703.1"/>
    <property type="molecule type" value="Genomic_DNA"/>
</dbReference>
<dbReference type="RefSeq" id="WP_003242876.1">
    <property type="nucleotide sequence ID" value="NZ_OZ025638.1"/>
</dbReference>
<dbReference type="RefSeq" id="YP_003097792.1">
    <property type="nucleotide sequence ID" value="NC_000964.3"/>
</dbReference>
<dbReference type="SMR" id="C0H3S3"/>
<dbReference type="STRING" id="224308.BSU36269"/>
<dbReference type="PaxDb" id="224308-BSU36269"/>
<dbReference type="EnsemblBacteria" id="CAX52703">
    <property type="protein sequence ID" value="CAX52703"/>
    <property type="gene ID" value="BSU_36269"/>
</dbReference>
<dbReference type="GeneID" id="8303126"/>
<dbReference type="KEGG" id="bsu:BSU36269"/>
<dbReference type="PATRIC" id="fig|224308.179.peg.3925"/>
<dbReference type="eggNOG" id="ENOG503292F">
    <property type="taxonomic scope" value="Bacteria"/>
</dbReference>
<dbReference type="InParanoid" id="C0H3S3"/>
<dbReference type="OrthoDB" id="2906987at2"/>
<dbReference type="BioCyc" id="BSUB:BSU36269-MONOMER"/>
<dbReference type="Proteomes" id="UP000001570">
    <property type="component" value="Chromosome"/>
</dbReference>
<gene>
    <name type="primary">ywzD</name>
    <name type="ordered locus">BSU36269</name>
</gene>
<name>YWZD_BACSU</name>
<sequence length="47" mass="5463">MSEKKLNQEEFLKILMHAHEIGEQSSEMTTKEMLENLISHIKNGYAT</sequence>
<organism>
    <name type="scientific">Bacillus subtilis (strain 168)</name>
    <dbReference type="NCBI Taxonomy" id="224308"/>
    <lineage>
        <taxon>Bacteria</taxon>
        <taxon>Bacillati</taxon>
        <taxon>Bacillota</taxon>
        <taxon>Bacilli</taxon>
        <taxon>Bacillales</taxon>
        <taxon>Bacillaceae</taxon>
        <taxon>Bacillus</taxon>
    </lineage>
</organism>
<reference key="1">
    <citation type="journal article" date="1997" name="Nature">
        <title>The complete genome sequence of the Gram-positive bacterium Bacillus subtilis.</title>
        <authorList>
            <person name="Kunst F."/>
            <person name="Ogasawara N."/>
            <person name="Moszer I."/>
            <person name="Albertini A.M."/>
            <person name="Alloni G."/>
            <person name="Azevedo V."/>
            <person name="Bertero M.G."/>
            <person name="Bessieres P."/>
            <person name="Bolotin A."/>
            <person name="Borchert S."/>
            <person name="Borriss R."/>
            <person name="Boursier L."/>
            <person name="Brans A."/>
            <person name="Braun M."/>
            <person name="Brignell S.C."/>
            <person name="Bron S."/>
            <person name="Brouillet S."/>
            <person name="Bruschi C.V."/>
            <person name="Caldwell B."/>
            <person name="Capuano V."/>
            <person name="Carter N.M."/>
            <person name="Choi S.-K."/>
            <person name="Codani J.-J."/>
            <person name="Connerton I.F."/>
            <person name="Cummings N.J."/>
            <person name="Daniel R.A."/>
            <person name="Denizot F."/>
            <person name="Devine K.M."/>
            <person name="Duesterhoeft A."/>
            <person name="Ehrlich S.D."/>
            <person name="Emmerson P.T."/>
            <person name="Entian K.-D."/>
            <person name="Errington J."/>
            <person name="Fabret C."/>
            <person name="Ferrari E."/>
            <person name="Foulger D."/>
            <person name="Fritz C."/>
            <person name="Fujita M."/>
            <person name="Fujita Y."/>
            <person name="Fuma S."/>
            <person name="Galizzi A."/>
            <person name="Galleron N."/>
            <person name="Ghim S.-Y."/>
            <person name="Glaser P."/>
            <person name="Goffeau A."/>
            <person name="Golightly E.J."/>
            <person name="Grandi G."/>
            <person name="Guiseppi G."/>
            <person name="Guy B.J."/>
            <person name="Haga K."/>
            <person name="Haiech J."/>
            <person name="Harwood C.R."/>
            <person name="Henaut A."/>
            <person name="Hilbert H."/>
            <person name="Holsappel S."/>
            <person name="Hosono S."/>
            <person name="Hullo M.-F."/>
            <person name="Itaya M."/>
            <person name="Jones L.-M."/>
            <person name="Joris B."/>
            <person name="Karamata D."/>
            <person name="Kasahara Y."/>
            <person name="Klaerr-Blanchard M."/>
            <person name="Klein C."/>
            <person name="Kobayashi Y."/>
            <person name="Koetter P."/>
            <person name="Koningstein G."/>
            <person name="Krogh S."/>
            <person name="Kumano M."/>
            <person name="Kurita K."/>
            <person name="Lapidus A."/>
            <person name="Lardinois S."/>
            <person name="Lauber J."/>
            <person name="Lazarevic V."/>
            <person name="Lee S.-M."/>
            <person name="Levine A."/>
            <person name="Liu H."/>
            <person name="Masuda S."/>
            <person name="Mauel C."/>
            <person name="Medigue C."/>
            <person name="Medina N."/>
            <person name="Mellado R.P."/>
            <person name="Mizuno M."/>
            <person name="Moestl D."/>
            <person name="Nakai S."/>
            <person name="Noback M."/>
            <person name="Noone D."/>
            <person name="O'Reilly M."/>
            <person name="Ogawa K."/>
            <person name="Ogiwara A."/>
            <person name="Oudega B."/>
            <person name="Park S.-H."/>
            <person name="Parro V."/>
            <person name="Pohl T.M."/>
            <person name="Portetelle D."/>
            <person name="Porwollik S."/>
            <person name="Prescott A.M."/>
            <person name="Presecan E."/>
            <person name="Pujic P."/>
            <person name="Purnelle B."/>
            <person name="Rapoport G."/>
            <person name="Rey M."/>
            <person name="Reynolds S."/>
            <person name="Rieger M."/>
            <person name="Rivolta C."/>
            <person name="Rocha E."/>
            <person name="Roche B."/>
            <person name="Rose M."/>
            <person name="Sadaie Y."/>
            <person name="Sato T."/>
            <person name="Scanlan E."/>
            <person name="Schleich S."/>
            <person name="Schroeter R."/>
            <person name="Scoffone F."/>
            <person name="Sekiguchi J."/>
            <person name="Sekowska A."/>
            <person name="Seror S.J."/>
            <person name="Serror P."/>
            <person name="Shin B.-S."/>
            <person name="Soldo B."/>
            <person name="Sorokin A."/>
            <person name="Tacconi E."/>
            <person name="Takagi T."/>
            <person name="Takahashi H."/>
            <person name="Takemaru K."/>
            <person name="Takeuchi M."/>
            <person name="Tamakoshi A."/>
            <person name="Tanaka T."/>
            <person name="Terpstra P."/>
            <person name="Tognoni A."/>
            <person name="Tosato V."/>
            <person name="Uchiyama S."/>
            <person name="Vandenbol M."/>
            <person name="Vannier F."/>
            <person name="Vassarotti A."/>
            <person name="Viari A."/>
            <person name="Wambutt R."/>
            <person name="Wedler E."/>
            <person name="Wedler H."/>
            <person name="Weitzenegger T."/>
            <person name="Winters P."/>
            <person name="Wipat A."/>
            <person name="Yamamoto H."/>
            <person name="Yamane K."/>
            <person name="Yasumoto K."/>
            <person name="Yata K."/>
            <person name="Yoshida K."/>
            <person name="Yoshikawa H.-F."/>
            <person name="Zumstein E."/>
            <person name="Yoshikawa H."/>
            <person name="Danchin A."/>
        </authorList>
    </citation>
    <scope>NUCLEOTIDE SEQUENCE [LARGE SCALE GENOMIC DNA]</scope>
    <source>
        <strain>168</strain>
    </source>
</reference>
<protein>
    <recommendedName>
        <fullName>Uncharacterized protein YwzD</fullName>
    </recommendedName>
</protein>
<feature type="chain" id="PRO_0000382217" description="Uncharacterized protein YwzD">
    <location>
        <begin position="1"/>
        <end position="47"/>
    </location>
</feature>